<comment type="catalytic activity">
    <reaction evidence="1">
        <text>(6R)-10-formyltetrahydrofolate + 5-amino-1-(5-phospho-beta-D-ribosyl)imidazole-4-carboxamide = 5-formamido-1-(5-phospho-D-ribosyl)imidazole-4-carboxamide + (6S)-5,6,7,8-tetrahydrofolate</text>
        <dbReference type="Rhea" id="RHEA:22192"/>
        <dbReference type="ChEBI" id="CHEBI:57453"/>
        <dbReference type="ChEBI" id="CHEBI:58467"/>
        <dbReference type="ChEBI" id="CHEBI:58475"/>
        <dbReference type="ChEBI" id="CHEBI:195366"/>
        <dbReference type="EC" id="2.1.2.3"/>
    </reaction>
</comment>
<comment type="catalytic activity">
    <reaction evidence="1">
        <text>IMP + H2O = 5-formamido-1-(5-phospho-D-ribosyl)imidazole-4-carboxamide</text>
        <dbReference type="Rhea" id="RHEA:18445"/>
        <dbReference type="ChEBI" id="CHEBI:15377"/>
        <dbReference type="ChEBI" id="CHEBI:58053"/>
        <dbReference type="ChEBI" id="CHEBI:58467"/>
        <dbReference type="EC" id="3.5.4.10"/>
    </reaction>
</comment>
<comment type="pathway">
    <text evidence="1">Purine metabolism; IMP biosynthesis via de novo pathway; 5-formamido-1-(5-phospho-D-ribosyl)imidazole-4-carboxamide from 5-amino-1-(5-phospho-D-ribosyl)imidazole-4-carboxamide (10-formyl THF route): step 1/1.</text>
</comment>
<comment type="pathway">
    <text evidence="1">Purine metabolism; IMP biosynthesis via de novo pathway; IMP from 5-formamido-1-(5-phospho-D-ribosyl)imidazole-4-carboxamide: step 1/1.</text>
</comment>
<comment type="domain">
    <text evidence="1">The IMP cyclohydrolase activity resides in the N-terminal region.</text>
</comment>
<comment type="similarity">
    <text evidence="1">Belongs to the PurH family.</text>
</comment>
<sequence>MLHSLPIRRALISVSDKGGLVPFARFLADHDIEILSTGGSAKALADAGIPVTEVADFTGFPEMLDGRVKTLHPKIHGGILGIRDNPEHQRAMAAHEILPIDLVVVNLYPFEATVAKGAAFEDCVENIDIGGPALIRAAAKNHEAVTVVVDPEDYQPVMDAMTAEGGATTLELRRKLASAAFARCGAYDGAISRWFQGQVGDETPRHIVFAGRLRQTLRYGENPHQKAAFYGHGIARPGVASAEQLQGKELSYNNINDTDAAFDLVCEFAEPAVAIIKHANPCGVAQGASVVEAYKAALACDPVSAFGGIVALNRPIDRDSAVEITKIFTEVVIAPDADAEARAIFAAKKNLRLLLTGVVADTTAPGLTVRSVAGGMLVQDRDAADLLSADLKVVSKRTPTERELADMLIAFKVCKHVKSNAIVYVKDGATVGIGAGQMSRVDSARIASWKADEAAEAAGLAQSPTQGSVVASDAFFPFADGLLAAAKAGATAVIQPGGSMRDDEVIKAADEAGLAMVFTGLRHFRH</sequence>
<dbReference type="EC" id="2.1.2.3" evidence="1"/>
<dbReference type="EC" id="3.5.4.10" evidence="1"/>
<dbReference type="EMBL" id="CP000230">
    <property type="protein sequence ID" value="ABC24449.1"/>
    <property type="molecule type" value="Genomic_DNA"/>
</dbReference>
<dbReference type="RefSeq" id="WP_011391402.1">
    <property type="nucleotide sequence ID" value="NC_007643.1"/>
</dbReference>
<dbReference type="RefSeq" id="YP_428736.1">
    <property type="nucleotide sequence ID" value="NC_007643.1"/>
</dbReference>
<dbReference type="SMR" id="Q2RN46"/>
<dbReference type="STRING" id="269796.Rru_A3655"/>
<dbReference type="EnsemblBacteria" id="ABC24449">
    <property type="protein sequence ID" value="ABC24449"/>
    <property type="gene ID" value="Rru_A3655"/>
</dbReference>
<dbReference type="KEGG" id="rru:Rru_A3655"/>
<dbReference type="PATRIC" id="fig|269796.9.peg.3777"/>
<dbReference type="eggNOG" id="COG0138">
    <property type="taxonomic scope" value="Bacteria"/>
</dbReference>
<dbReference type="HOGENOM" id="CLU_016316_5_2_5"/>
<dbReference type="PhylomeDB" id="Q2RN46"/>
<dbReference type="UniPathway" id="UPA00074">
    <property type="reaction ID" value="UER00133"/>
</dbReference>
<dbReference type="UniPathway" id="UPA00074">
    <property type="reaction ID" value="UER00135"/>
</dbReference>
<dbReference type="Proteomes" id="UP000001929">
    <property type="component" value="Chromosome"/>
</dbReference>
<dbReference type="GO" id="GO:0005829">
    <property type="term" value="C:cytosol"/>
    <property type="evidence" value="ECO:0007669"/>
    <property type="project" value="TreeGrafter"/>
</dbReference>
<dbReference type="GO" id="GO:0003937">
    <property type="term" value="F:IMP cyclohydrolase activity"/>
    <property type="evidence" value="ECO:0007669"/>
    <property type="project" value="UniProtKB-UniRule"/>
</dbReference>
<dbReference type="GO" id="GO:0004643">
    <property type="term" value="F:phosphoribosylaminoimidazolecarboxamide formyltransferase activity"/>
    <property type="evidence" value="ECO:0007669"/>
    <property type="project" value="UniProtKB-UniRule"/>
</dbReference>
<dbReference type="GO" id="GO:0006189">
    <property type="term" value="P:'de novo' IMP biosynthetic process"/>
    <property type="evidence" value="ECO:0007669"/>
    <property type="project" value="UniProtKB-UniRule"/>
</dbReference>
<dbReference type="CDD" id="cd01421">
    <property type="entry name" value="IMPCH"/>
    <property type="match status" value="1"/>
</dbReference>
<dbReference type="FunFam" id="3.40.140.20:FF:000001">
    <property type="entry name" value="Bifunctional purine biosynthesis protein PurH"/>
    <property type="match status" value="1"/>
</dbReference>
<dbReference type="FunFam" id="3.40.140.20:FF:000002">
    <property type="entry name" value="Bifunctional purine biosynthesis protein PurH"/>
    <property type="match status" value="1"/>
</dbReference>
<dbReference type="FunFam" id="3.40.50.1380:FF:000001">
    <property type="entry name" value="Bifunctional purine biosynthesis protein PurH"/>
    <property type="match status" value="1"/>
</dbReference>
<dbReference type="Gene3D" id="3.40.140.20">
    <property type="match status" value="2"/>
</dbReference>
<dbReference type="Gene3D" id="3.40.50.1380">
    <property type="entry name" value="Methylglyoxal synthase-like domain"/>
    <property type="match status" value="1"/>
</dbReference>
<dbReference type="HAMAP" id="MF_00139">
    <property type="entry name" value="PurH"/>
    <property type="match status" value="1"/>
</dbReference>
<dbReference type="InterPro" id="IPR024051">
    <property type="entry name" value="AICAR_Tfase_dup_dom_sf"/>
</dbReference>
<dbReference type="InterPro" id="IPR016193">
    <property type="entry name" value="Cytidine_deaminase-like"/>
</dbReference>
<dbReference type="InterPro" id="IPR011607">
    <property type="entry name" value="MGS-like_dom"/>
</dbReference>
<dbReference type="InterPro" id="IPR036914">
    <property type="entry name" value="MGS-like_dom_sf"/>
</dbReference>
<dbReference type="InterPro" id="IPR002695">
    <property type="entry name" value="PurH-like"/>
</dbReference>
<dbReference type="NCBIfam" id="NF002049">
    <property type="entry name" value="PRK00881.1"/>
    <property type="match status" value="1"/>
</dbReference>
<dbReference type="NCBIfam" id="TIGR00355">
    <property type="entry name" value="purH"/>
    <property type="match status" value="1"/>
</dbReference>
<dbReference type="PANTHER" id="PTHR11692:SF0">
    <property type="entry name" value="BIFUNCTIONAL PURINE BIOSYNTHESIS PROTEIN ATIC"/>
    <property type="match status" value="1"/>
</dbReference>
<dbReference type="PANTHER" id="PTHR11692">
    <property type="entry name" value="BIFUNCTIONAL PURINE BIOSYNTHESIS PROTEIN PURH"/>
    <property type="match status" value="1"/>
</dbReference>
<dbReference type="Pfam" id="PF01808">
    <property type="entry name" value="AICARFT_IMPCHas"/>
    <property type="match status" value="1"/>
</dbReference>
<dbReference type="Pfam" id="PF02142">
    <property type="entry name" value="MGS"/>
    <property type="match status" value="1"/>
</dbReference>
<dbReference type="PIRSF" id="PIRSF000414">
    <property type="entry name" value="AICARFT_IMPCHas"/>
    <property type="match status" value="1"/>
</dbReference>
<dbReference type="SMART" id="SM00798">
    <property type="entry name" value="AICARFT_IMPCHas"/>
    <property type="match status" value="1"/>
</dbReference>
<dbReference type="SMART" id="SM00851">
    <property type="entry name" value="MGS"/>
    <property type="match status" value="1"/>
</dbReference>
<dbReference type="SUPFAM" id="SSF53927">
    <property type="entry name" value="Cytidine deaminase-like"/>
    <property type="match status" value="1"/>
</dbReference>
<dbReference type="SUPFAM" id="SSF52335">
    <property type="entry name" value="Methylglyoxal synthase-like"/>
    <property type="match status" value="1"/>
</dbReference>
<dbReference type="PROSITE" id="PS51855">
    <property type="entry name" value="MGS"/>
    <property type="match status" value="1"/>
</dbReference>
<proteinExistence type="inferred from homology"/>
<gene>
    <name evidence="1" type="primary">purH</name>
    <name type="ordered locus">Rru_A3655</name>
</gene>
<accession>Q2RN46</accession>
<keyword id="KW-0378">Hydrolase</keyword>
<keyword id="KW-0511">Multifunctional enzyme</keyword>
<keyword id="KW-0658">Purine biosynthesis</keyword>
<keyword id="KW-1185">Reference proteome</keyword>
<keyword id="KW-0808">Transferase</keyword>
<organism>
    <name type="scientific">Rhodospirillum rubrum (strain ATCC 11170 / ATH 1.1.1 / DSM 467 / LMG 4362 / NCIMB 8255 / S1)</name>
    <dbReference type="NCBI Taxonomy" id="269796"/>
    <lineage>
        <taxon>Bacteria</taxon>
        <taxon>Pseudomonadati</taxon>
        <taxon>Pseudomonadota</taxon>
        <taxon>Alphaproteobacteria</taxon>
        <taxon>Rhodospirillales</taxon>
        <taxon>Rhodospirillaceae</taxon>
        <taxon>Rhodospirillum</taxon>
    </lineage>
</organism>
<evidence type="ECO:0000255" key="1">
    <source>
        <dbReference type="HAMAP-Rule" id="MF_00139"/>
    </source>
</evidence>
<evidence type="ECO:0000255" key="2">
    <source>
        <dbReference type="PROSITE-ProRule" id="PRU01202"/>
    </source>
</evidence>
<reference key="1">
    <citation type="journal article" date="2011" name="Stand. Genomic Sci.">
        <title>Complete genome sequence of Rhodospirillum rubrum type strain (S1).</title>
        <authorList>
            <person name="Munk A.C."/>
            <person name="Copeland A."/>
            <person name="Lucas S."/>
            <person name="Lapidus A."/>
            <person name="Del Rio T.G."/>
            <person name="Barry K."/>
            <person name="Detter J.C."/>
            <person name="Hammon N."/>
            <person name="Israni S."/>
            <person name="Pitluck S."/>
            <person name="Brettin T."/>
            <person name="Bruce D."/>
            <person name="Han C."/>
            <person name="Tapia R."/>
            <person name="Gilna P."/>
            <person name="Schmutz J."/>
            <person name="Larimer F."/>
            <person name="Land M."/>
            <person name="Kyrpides N.C."/>
            <person name="Mavromatis K."/>
            <person name="Richardson P."/>
            <person name="Rohde M."/>
            <person name="Goeker M."/>
            <person name="Klenk H.P."/>
            <person name="Zhang Y."/>
            <person name="Roberts G.P."/>
            <person name="Reslewic S."/>
            <person name="Schwartz D.C."/>
        </authorList>
    </citation>
    <scope>NUCLEOTIDE SEQUENCE [LARGE SCALE GENOMIC DNA]</scope>
    <source>
        <strain>ATCC 11170 / ATH 1.1.1 / DSM 467 / LMG 4362 / NCIMB 8255 / S1</strain>
    </source>
</reference>
<name>PUR9_RHORT</name>
<feature type="chain" id="PRO_1000057908" description="Bifunctional purine biosynthesis protein PurH">
    <location>
        <begin position="1"/>
        <end position="526"/>
    </location>
</feature>
<feature type="domain" description="MGS-like" evidence="2">
    <location>
        <begin position="1"/>
        <end position="149"/>
    </location>
</feature>
<protein>
    <recommendedName>
        <fullName evidence="1">Bifunctional purine biosynthesis protein PurH</fullName>
    </recommendedName>
    <domain>
        <recommendedName>
            <fullName evidence="1">Phosphoribosylaminoimidazolecarboxamide formyltransferase</fullName>
            <ecNumber evidence="1">2.1.2.3</ecNumber>
        </recommendedName>
        <alternativeName>
            <fullName evidence="1">AICAR transformylase</fullName>
        </alternativeName>
    </domain>
    <domain>
        <recommendedName>
            <fullName evidence="1">IMP cyclohydrolase</fullName>
            <ecNumber evidence="1">3.5.4.10</ecNumber>
        </recommendedName>
        <alternativeName>
            <fullName evidence="1">ATIC</fullName>
        </alternativeName>
        <alternativeName>
            <fullName evidence="1">IMP synthase</fullName>
        </alternativeName>
        <alternativeName>
            <fullName evidence="1">Inosinicase</fullName>
        </alternativeName>
    </domain>
</protein>